<reference key="1">
    <citation type="submission" date="2007-04" db="EMBL/GenBank/DDBJ databases">
        <title>Complete sequence of Shewanella putrefaciens CN-32.</title>
        <authorList>
            <consortium name="US DOE Joint Genome Institute"/>
            <person name="Copeland A."/>
            <person name="Lucas S."/>
            <person name="Lapidus A."/>
            <person name="Barry K."/>
            <person name="Detter J.C."/>
            <person name="Glavina del Rio T."/>
            <person name="Hammon N."/>
            <person name="Israni S."/>
            <person name="Dalin E."/>
            <person name="Tice H."/>
            <person name="Pitluck S."/>
            <person name="Chain P."/>
            <person name="Malfatti S."/>
            <person name="Shin M."/>
            <person name="Vergez L."/>
            <person name="Schmutz J."/>
            <person name="Larimer F."/>
            <person name="Land M."/>
            <person name="Hauser L."/>
            <person name="Kyrpides N."/>
            <person name="Mikhailova N."/>
            <person name="Romine M.F."/>
            <person name="Fredrickson J."/>
            <person name="Tiedje J."/>
            <person name="Richardson P."/>
        </authorList>
    </citation>
    <scope>NUCLEOTIDE SEQUENCE [LARGE SCALE GENOMIC DNA]</scope>
    <source>
        <strain>CN-32 / ATCC BAA-453</strain>
    </source>
</reference>
<proteinExistence type="inferred from homology"/>
<organism>
    <name type="scientific">Shewanella putrefaciens (strain CN-32 / ATCC BAA-453)</name>
    <dbReference type="NCBI Taxonomy" id="319224"/>
    <lineage>
        <taxon>Bacteria</taxon>
        <taxon>Pseudomonadati</taxon>
        <taxon>Pseudomonadota</taxon>
        <taxon>Gammaproteobacteria</taxon>
        <taxon>Alteromonadales</taxon>
        <taxon>Shewanellaceae</taxon>
        <taxon>Shewanella</taxon>
    </lineage>
</organism>
<gene>
    <name evidence="1" type="primary">ileS</name>
    <name type="ordered locus">Sputcn32_1059</name>
</gene>
<dbReference type="EC" id="6.1.1.5" evidence="1"/>
<dbReference type="EMBL" id="CP000681">
    <property type="protein sequence ID" value="ABP74787.1"/>
    <property type="molecule type" value="Genomic_DNA"/>
</dbReference>
<dbReference type="SMR" id="A4Y4A4"/>
<dbReference type="STRING" id="319224.Sputcn32_1059"/>
<dbReference type="KEGG" id="spc:Sputcn32_1059"/>
<dbReference type="eggNOG" id="COG0060">
    <property type="taxonomic scope" value="Bacteria"/>
</dbReference>
<dbReference type="HOGENOM" id="CLU_001493_7_1_6"/>
<dbReference type="GO" id="GO:0005829">
    <property type="term" value="C:cytosol"/>
    <property type="evidence" value="ECO:0007669"/>
    <property type="project" value="TreeGrafter"/>
</dbReference>
<dbReference type="GO" id="GO:0002161">
    <property type="term" value="F:aminoacyl-tRNA deacylase activity"/>
    <property type="evidence" value="ECO:0007669"/>
    <property type="project" value="InterPro"/>
</dbReference>
<dbReference type="GO" id="GO:0005524">
    <property type="term" value="F:ATP binding"/>
    <property type="evidence" value="ECO:0007669"/>
    <property type="project" value="UniProtKB-UniRule"/>
</dbReference>
<dbReference type="GO" id="GO:0004822">
    <property type="term" value="F:isoleucine-tRNA ligase activity"/>
    <property type="evidence" value="ECO:0007669"/>
    <property type="project" value="UniProtKB-UniRule"/>
</dbReference>
<dbReference type="GO" id="GO:0000049">
    <property type="term" value="F:tRNA binding"/>
    <property type="evidence" value="ECO:0007669"/>
    <property type="project" value="InterPro"/>
</dbReference>
<dbReference type="GO" id="GO:0008270">
    <property type="term" value="F:zinc ion binding"/>
    <property type="evidence" value="ECO:0007669"/>
    <property type="project" value="UniProtKB-UniRule"/>
</dbReference>
<dbReference type="GO" id="GO:0006428">
    <property type="term" value="P:isoleucyl-tRNA aminoacylation"/>
    <property type="evidence" value="ECO:0007669"/>
    <property type="project" value="UniProtKB-UniRule"/>
</dbReference>
<dbReference type="CDD" id="cd07960">
    <property type="entry name" value="Anticodon_Ia_Ile_BEm"/>
    <property type="match status" value="1"/>
</dbReference>
<dbReference type="CDD" id="cd00818">
    <property type="entry name" value="IleRS_core"/>
    <property type="match status" value="1"/>
</dbReference>
<dbReference type="FunFam" id="1.10.730.20:FF:000001">
    <property type="entry name" value="Isoleucine--tRNA ligase"/>
    <property type="match status" value="1"/>
</dbReference>
<dbReference type="FunFam" id="3.40.50.620:FF:000042">
    <property type="entry name" value="Isoleucine--tRNA ligase"/>
    <property type="match status" value="1"/>
</dbReference>
<dbReference type="FunFam" id="3.40.50.620:FF:000048">
    <property type="entry name" value="Isoleucine--tRNA ligase"/>
    <property type="match status" value="1"/>
</dbReference>
<dbReference type="FunFam" id="3.90.740.10:FF:000022">
    <property type="entry name" value="Isoleucine--tRNA ligase"/>
    <property type="match status" value="1"/>
</dbReference>
<dbReference type="Gene3D" id="1.10.730.20">
    <property type="match status" value="1"/>
</dbReference>
<dbReference type="Gene3D" id="3.40.50.620">
    <property type="entry name" value="HUPs"/>
    <property type="match status" value="2"/>
</dbReference>
<dbReference type="HAMAP" id="MF_02002">
    <property type="entry name" value="Ile_tRNA_synth_type1"/>
    <property type="match status" value="1"/>
</dbReference>
<dbReference type="InterPro" id="IPR001412">
    <property type="entry name" value="aa-tRNA-synth_I_CS"/>
</dbReference>
<dbReference type="InterPro" id="IPR002300">
    <property type="entry name" value="aa-tRNA-synth_Ia"/>
</dbReference>
<dbReference type="InterPro" id="IPR033708">
    <property type="entry name" value="Anticodon_Ile_BEm"/>
</dbReference>
<dbReference type="InterPro" id="IPR002301">
    <property type="entry name" value="Ile-tRNA-ligase"/>
</dbReference>
<dbReference type="InterPro" id="IPR023585">
    <property type="entry name" value="Ile-tRNA-ligase_type1"/>
</dbReference>
<dbReference type="InterPro" id="IPR050081">
    <property type="entry name" value="Ile-tRNA_ligase"/>
</dbReference>
<dbReference type="InterPro" id="IPR013155">
    <property type="entry name" value="M/V/L/I-tRNA-synth_anticd-bd"/>
</dbReference>
<dbReference type="InterPro" id="IPR014729">
    <property type="entry name" value="Rossmann-like_a/b/a_fold"/>
</dbReference>
<dbReference type="InterPro" id="IPR009080">
    <property type="entry name" value="tRNAsynth_Ia_anticodon-bd"/>
</dbReference>
<dbReference type="InterPro" id="IPR009008">
    <property type="entry name" value="Val/Leu/Ile-tRNA-synth_edit"/>
</dbReference>
<dbReference type="InterPro" id="IPR010663">
    <property type="entry name" value="Znf_FPG/IleRS"/>
</dbReference>
<dbReference type="NCBIfam" id="TIGR00392">
    <property type="entry name" value="ileS"/>
    <property type="match status" value="1"/>
</dbReference>
<dbReference type="PANTHER" id="PTHR42765:SF1">
    <property type="entry name" value="ISOLEUCINE--TRNA LIGASE, MITOCHONDRIAL"/>
    <property type="match status" value="1"/>
</dbReference>
<dbReference type="PANTHER" id="PTHR42765">
    <property type="entry name" value="SOLEUCYL-TRNA SYNTHETASE"/>
    <property type="match status" value="1"/>
</dbReference>
<dbReference type="Pfam" id="PF08264">
    <property type="entry name" value="Anticodon_1"/>
    <property type="match status" value="1"/>
</dbReference>
<dbReference type="Pfam" id="PF00133">
    <property type="entry name" value="tRNA-synt_1"/>
    <property type="match status" value="1"/>
</dbReference>
<dbReference type="Pfam" id="PF06827">
    <property type="entry name" value="zf-FPG_IleRS"/>
    <property type="match status" value="1"/>
</dbReference>
<dbReference type="PRINTS" id="PR00984">
    <property type="entry name" value="TRNASYNTHILE"/>
</dbReference>
<dbReference type="SUPFAM" id="SSF47323">
    <property type="entry name" value="Anticodon-binding domain of a subclass of class I aminoacyl-tRNA synthetases"/>
    <property type="match status" value="1"/>
</dbReference>
<dbReference type="SUPFAM" id="SSF52374">
    <property type="entry name" value="Nucleotidylyl transferase"/>
    <property type="match status" value="1"/>
</dbReference>
<dbReference type="SUPFAM" id="SSF50677">
    <property type="entry name" value="ValRS/IleRS/LeuRS editing domain"/>
    <property type="match status" value="1"/>
</dbReference>
<dbReference type="PROSITE" id="PS00178">
    <property type="entry name" value="AA_TRNA_LIGASE_I"/>
    <property type="match status" value="1"/>
</dbReference>
<protein>
    <recommendedName>
        <fullName evidence="1">Isoleucine--tRNA ligase</fullName>
        <ecNumber evidence="1">6.1.1.5</ecNumber>
    </recommendedName>
    <alternativeName>
        <fullName evidence="1">Isoleucyl-tRNA synthetase</fullName>
        <shortName evidence="1">IleRS</shortName>
    </alternativeName>
</protein>
<evidence type="ECO:0000255" key="1">
    <source>
        <dbReference type="HAMAP-Rule" id="MF_02002"/>
    </source>
</evidence>
<keyword id="KW-0030">Aminoacyl-tRNA synthetase</keyword>
<keyword id="KW-0067">ATP-binding</keyword>
<keyword id="KW-0963">Cytoplasm</keyword>
<keyword id="KW-0436">Ligase</keyword>
<keyword id="KW-0479">Metal-binding</keyword>
<keyword id="KW-0547">Nucleotide-binding</keyword>
<keyword id="KW-0648">Protein biosynthesis</keyword>
<keyword id="KW-0862">Zinc</keyword>
<sequence length="940" mass="105682">MSDYKFTLNLPETEFPMRGNLANREPEMLERWTKDGLYQQIRDSRIGRTPFILHDGPPYANGSIHIGHSVNKILKDIIVKSKTMSGFDAPYVPGWDCHGLPIELKVEQKVGKPGQKITAAEFREECRKYAAEQVNGQREDFIRLGVLGDWQNPYLTMDFSTEANIVRSLSKVIESGHLHKGVKPVHWCTDCGSALAEAEVEYEDKTSPAIDVAFVAADSKAVAAKFGVSDYSHPVSMVIWTTTPWTLPANRALSLSPELDYSLVEFEKDGVTQALILAEVLVESCLTRYNVESHTVLGTTKGAALELVCFNHPFLDFDVPAILGDHVTTDAGTGIVHTAPGHGQDDFVVGQKYGLEVANPVGDNGVYKPDTKYFAGQHVFKANDNVVALLREKGALLNHVAYRHSYPHCWRHKTPIIFRATPQWFISMDNHGLRTQALKEIEQTQWIPDWGQSRIEKMVENRPDWCISRQRTWGVPITLFVNRETEELHPDSVSLMERVANRIEQQGIQAWWDLDAAELLGDEADQYRKVTDTLDVWYDSGSTFSSVVAARPEFHGHGVDLYLEGSDQHRGWFMSSLMISTAMNGKAPYKQVLTHGFTVDGKGRKMSKSIGNVIAPQTVTNKLGADILRLWVAATDYSGEMTVSDEILNRSADAYRRIRNTARFLLANLNGFDPAKDLVAVEDMVALDRWVVRRAAALQQEIIEAYDQYNFHIVTQKLMQFCSVELGSFYLDIIKDRQYTAKQEGHARRSCQSALFHIAEAMVRWIAPVLSFTADEVWQLLPGERDAYVFTQEWYQGLKSVTLATDLSDDYWQQLLAVRNEVNKVIEQARRDKRIGGSLEAEVTLFADATLTEQLTHIGDELRFVLLTSEAKVLPLADATTEAVETELASLKLVVASSTAEKCERCWHHREEVGTIEAHPTLCTRCVTNIEGDGEVRQFA</sequence>
<feature type="chain" id="PRO_1000022119" description="Isoleucine--tRNA ligase">
    <location>
        <begin position="1"/>
        <end position="940"/>
    </location>
</feature>
<feature type="short sequence motif" description="'HIGH' region">
    <location>
        <begin position="58"/>
        <end position="68"/>
    </location>
</feature>
<feature type="short sequence motif" description="'KMSKS' region">
    <location>
        <begin position="605"/>
        <end position="609"/>
    </location>
</feature>
<feature type="binding site" evidence="1">
    <location>
        <position position="564"/>
    </location>
    <ligand>
        <name>L-isoleucyl-5'-AMP</name>
        <dbReference type="ChEBI" id="CHEBI:178002"/>
    </ligand>
</feature>
<feature type="binding site" evidence="1">
    <location>
        <position position="608"/>
    </location>
    <ligand>
        <name>ATP</name>
        <dbReference type="ChEBI" id="CHEBI:30616"/>
    </ligand>
</feature>
<feature type="binding site" evidence="1">
    <location>
        <position position="903"/>
    </location>
    <ligand>
        <name>Zn(2+)</name>
        <dbReference type="ChEBI" id="CHEBI:29105"/>
    </ligand>
</feature>
<feature type="binding site" evidence="1">
    <location>
        <position position="906"/>
    </location>
    <ligand>
        <name>Zn(2+)</name>
        <dbReference type="ChEBI" id="CHEBI:29105"/>
    </ligand>
</feature>
<feature type="binding site" evidence="1">
    <location>
        <position position="923"/>
    </location>
    <ligand>
        <name>Zn(2+)</name>
        <dbReference type="ChEBI" id="CHEBI:29105"/>
    </ligand>
</feature>
<feature type="binding site" evidence="1">
    <location>
        <position position="926"/>
    </location>
    <ligand>
        <name>Zn(2+)</name>
        <dbReference type="ChEBI" id="CHEBI:29105"/>
    </ligand>
</feature>
<accession>A4Y4A4</accession>
<comment type="function">
    <text evidence="1">Catalyzes the attachment of isoleucine to tRNA(Ile). As IleRS can inadvertently accommodate and process structurally similar amino acids such as valine, to avoid such errors it has two additional distinct tRNA(Ile)-dependent editing activities. One activity is designated as 'pretransfer' editing and involves the hydrolysis of activated Val-AMP. The other activity is designated 'posttransfer' editing and involves deacylation of mischarged Val-tRNA(Ile).</text>
</comment>
<comment type="catalytic activity">
    <reaction evidence="1">
        <text>tRNA(Ile) + L-isoleucine + ATP = L-isoleucyl-tRNA(Ile) + AMP + diphosphate</text>
        <dbReference type="Rhea" id="RHEA:11060"/>
        <dbReference type="Rhea" id="RHEA-COMP:9666"/>
        <dbReference type="Rhea" id="RHEA-COMP:9695"/>
        <dbReference type="ChEBI" id="CHEBI:30616"/>
        <dbReference type="ChEBI" id="CHEBI:33019"/>
        <dbReference type="ChEBI" id="CHEBI:58045"/>
        <dbReference type="ChEBI" id="CHEBI:78442"/>
        <dbReference type="ChEBI" id="CHEBI:78528"/>
        <dbReference type="ChEBI" id="CHEBI:456215"/>
        <dbReference type="EC" id="6.1.1.5"/>
    </reaction>
</comment>
<comment type="cofactor">
    <cofactor evidence="1">
        <name>Zn(2+)</name>
        <dbReference type="ChEBI" id="CHEBI:29105"/>
    </cofactor>
    <text evidence="1">Binds 1 zinc ion per subunit.</text>
</comment>
<comment type="subunit">
    <text evidence="1">Monomer.</text>
</comment>
<comment type="subcellular location">
    <subcellularLocation>
        <location evidence="1">Cytoplasm</location>
    </subcellularLocation>
</comment>
<comment type="domain">
    <text evidence="1">IleRS has two distinct active sites: one for aminoacylation and one for editing. The misactivated valine is translocated from the active site to the editing site, which sterically excludes the correctly activated isoleucine. The single editing site contains two valyl binding pockets, one specific for each substrate (Val-AMP or Val-tRNA(Ile)).</text>
</comment>
<comment type="similarity">
    <text evidence="1">Belongs to the class-I aminoacyl-tRNA synthetase family. IleS type 1 subfamily.</text>
</comment>
<name>SYI_SHEPC</name>